<evidence type="ECO:0000250" key="1"/>
<evidence type="ECO:0000250" key="2">
    <source>
        <dbReference type="UniProtKB" id="Q8BGT8"/>
    </source>
</evidence>
<evidence type="ECO:0000255" key="3"/>
<evidence type="ECO:0000255" key="4">
    <source>
        <dbReference type="PROSITE-ProRule" id="PRU00316"/>
    </source>
</evidence>
<evidence type="ECO:0000269" key="5">
    <source>
    </source>
</evidence>
<evidence type="ECO:0000269" key="6">
    <source>
    </source>
</evidence>
<evidence type="ECO:0000269" key="7">
    <source>
    </source>
</evidence>
<evidence type="ECO:0000269" key="8">
    <source>
    </source>
</evidence>
<evidence type="ECO:0000269" key="9">
    <source>
    </source>
</evidence>
<evidence type="ECO:0000269" key="10">
    <source>
    </source>
</evidence>
<evidence type="ECO:0000269" key="11">
    <source ref="5"/>
</evidence>
<evidence type="ECO:0000303" key="12">
    <source>
    </source>
</evidence>
<evidence type="ECO:0000303" key="13">
    <source>
    </source>
</evidence>
<evidence type="ECO:0000305" key="14"/>
<keyword id="KW-0025">Alternative splicing</keyword>
<keyword id="KW-0325">Glycoprotein</keyword>
<keyword id="KW-0597">Phosphoprotein</keyword>
<keyword id="KW-1267">Proteomics identification</keyword>
<keyword id="KW-1185">Reference proteome</keyword>
<name>PHIPL_HUMAN</name>
<proteinExistence type="evidence at protein level"/>
<comment type="function">
    <text evidence="1">May play a role in the development of the central system.</text>
</comment>
<comment type="interaction">
    <interactant intactId="EBI-748888">
        <id>Q96FC7</id>
    </interactant>
    <interactant intactId="EBI-19944212">
        <id>A8MW99</id>
        <label>MEI4</label>
    </interactant>
    <organismsDiffer>false</organismsDiffer>
    <experiments>3</experiments>
</comment>
<comment type="interaction">
    <interactant intactId="EBI-748888">
        <id>Q96FC7</id>
    </interactant>
    <interactant intactId="EBI-11524542">
        <id>O76083-2</id>
        <label>PDE9A</label>
    </interactant>
    <organismsDiffer>false</organismsDiffer>
    <experiments>3</experiments>
</comment>
<comment type="interaction">
    <interactant intactId="EBI-10285660">
        <id>Q96FC7-2</id>
    </interactant>
    <interactant intactId="EBI-742764">
        <id>O76083</id>
        <label>PDE9A</label>
    </interactant>
    <organismsDiffer>false</organismsDiffer>
    <experiments>3</experiments>
</comment>
<comment type="alternative products">
    <event type="alternative splicing"/>
    <isoform>
        <id>Q96FC7-1</id>
        <name>1</name>
        <sequence type="displayed"/>
    </isoform>
    <isoform>
        <id>Q96FC7-2</id>
        <name>2</name>
        <sequence type="described" ref="VSP_034067"/>
    </isoform>
    <isoform>
        <id>Q96FC7-3</id>
        <name>3</name>
        <sequence type="described" ref="VSP_034068 VSP_034069"/>
    </isoform>
</comment>
<comment type="similarity">
    <text evidence="14">Belongs to the PHYHIP family.</text>
</comment>
<comment type="sequence caution" evidence="14">
    <conflict type="erroneous initiation">
        <sequence resource="EMBL-CDS" id="AAQ88529"/>
    </conflict>
    <text>Truncated N-terminus.</text>
</comment>
<comment type="sequence caution" evidence="14">
    <conflict type="frameshift">
        <sequence resource="EMBL-CDS" id="CAB97028"/>
    </conflict>
</comment>
<organism>
    <name type="scientific">Homo sapiens</name>
    <name type="common">Human</name>
    <dbReference type="NCBI Taxonomy" id="9606"/>
    <lineage>
        <taxon>Eukaryota</taxon>
        <taxon>Metazoa</taxon>
        <taxon>Chordata</taxon>
        <taxon>Craniata</taxon>
        <taxon>Vertebrata</taxon>
        <taxon>Euteleostomi</taxon>
        <taxon>Mammalia</taxon>
        <taxon>Eutheria</taxon>
        <taxon>Euarchontoglires</taxon>
        <taxon>Primates</taxon>
        <taxon>Haplorrhini</taxon>
        <taxon>Catarrhini</taxon>
        <taxon>Hominidae</taxon>
        <taxon>Homo</taxon>
    </lineage>
</organism>
<sequence>MEVPRLDHALNSPTSPCEEVIKNLSLEAIQLCDRDGNKSQDSGIAEMEELPVPHNIKISNITCDSFKISWEMDSKSKDRITHYFIDLNKKENKNSNKFKHKDVPTKLVAKAVPLPMTVRGHWFLSPRTEYTVAVQTASKQVDGDYVVSEWSEIIEFCTADYSKVHLTQLLEKAEVIAGRMLKFSVFYRNQHKEYFDYVREHHGNAMQPSVKDNSGSHGSPISGKLEGIFFSCSTEFNTGKPPQDSPYGRYRFEIAAEKLFNPNTNLYFGDFYCMYTAYHYVILVIAPVGSPGDEFCKQRLPQLNSKDNKFLTCTEEDGVLVYHHAQDVILEVIYTDPVDLSVGTVAEITGHQLMSLSTANAKKDPSCKTCNISVGR</sequence>
<protein>
    <recommendedName>
        <fullName>Phytanoyl-CoA hydroxylase-interacting protein-like</fullName>
    </recommendedName>
</protein>
<dbReference type="EMBL" id="AL365474">
    <property type="protein sequence ID" value="CAB97028.1"/>
    <property type="status" value="ALT_FRAME"/>
    <property type="molecule type" value="mRNA"/>
</dbReference>
<dbReference type="EMBL" id="AK054956">
    <property type="protein sequence ID" value="BAB70832.1"/>
    <property type="molecule type" value="mRNA"/>
</dbReference>
<dbReference type="EMBL" id="AL834339">
    <property type="protein sequence ID" value="CAD39006.1"/>
    <property type="molecule type" value="mRNA"/>
</dbReference>
<dbReference type="EMBL" id="CR749429">
    <property type="protein sequence ID" value="CAH18267.1"/>
    <property type="molecule type" value="mRNA"/>
</dbReference>
<dbReference type="EMBL" id="AC016398">
    <property type="status" value="NOT_ANNOTATED_CDS"/>
    <property type="molecule type" value="Genomic_DNA"/>
</dbReference>
<dbReference type="EMBL" id="AC025038">
    <property type="status" value="NOT_ANNOTATED_CDS"/>
    <property type="molecule type" value="Genomic_DNA"/>
</dbReference>
<dbReference type="EMBL" id="CH471083">
    <property type="protein sequence ID" value="EAW54185.1"/>
    <property type="molecule type" value="Genomic_DNA"/>
</dbReference>
<dbReference type="EMBL" id="BC011268">
    <property type="protein sequence ID" value="AAH11268.2"/>
    <property type="molecule type" value="mRNA"/>
</dbReference>
<dbReference type="EMBL" id="AY358162">
    <property type="protein sequence ID" value="AAQ88529.1"/>
    <property type="status" value="ALT_INIT"/>
    <property type="molecule type" value="mRNA"/>
</dbReference>
<dbReference type="EMBL" id="AB058699">
    <property type="protein sequence ID" value="BAB47425.1"/>
    <property type="molecule type" value="mRNA"/>
</dbReference>
<dbReference type="CCDS" id="CCDS44405.1">
    <molecule id="Q96FC7-2"/>
</dbReference>
<dbReference type="CCDS" id="CCDS7254.1">
    <molecule id="Q96FC7-1"/>
</dbReference>
<dbReference type="RefSeq" id="NP_001137246.1">
    <molecule id="Q96FC7-2"/>
    <property type="nucleotide sequence ID" value="NM_001143774.2"/>
</dbReference>
<dbReference type="RefSeq" id="NP_115815.2">
    <molecule id="Q96FC7-1"/>
    <property type="nucleotide sequence ID" value="NM_032439.4"/>
</dbReference>
<dbReference type="SMR" id="Q96FC7"/>
<dbReference type="BioGRID" id="124092">
    <property type="interactions" value="20"/>
</dbReference>
<dbReference type="FunCoup" id="Q96FC7">
    <property type="interactions" value="803"/>
</dbReference>
<dbReference type="IntAct" id="Q96FC7">
    <property type="interactions" value="38"/>
</dbReference>
<dbReference type="MINT" id="Q96FC7"/>
<dbReference type="STRING" id="9606.ENSP00000362987"/>
<dbReference type="GlyCosmos" id="Q96FC7">
    <property type="glycosylation" value="3 sites, 1 glycan"/>
</dbReference>
<dbReference type="GlyGen" id="Q96FC7">
    <property type="glycosylation" value="3 sites, 1 O-linked glycan (1 site)"/>
</dbReference>
<dbReference type="iPTMnet" id="Q96FC7"/>
<dbReference type="PhosphoSitePlus" id="Q96FC7"/>
<dbReference type="BioMuta" id="PHYHIPL"/>
<dbReference type="DMDM" id="296439274"/>
<dbReference type="jPOST" id="Q96FC7"/>
<dbReference type="MassIVE" id="Q96FC7"/>
<dbReference type="PaxDb" id="9606-ENSP00000362987"/>
<dbReference type="PeptideAtlas" id="Q96FC7"/>
<dbReference type="ProteomicsDB" id="76508">
    <molecule id="Q96FC7-1"/>
</dbReference>
<dbReference type="ProteomicsDB" id="76509">
    <molecule id="Q96FC7-2"/>
</dbReference>
<dbReference type="ProteomicsDB" id="76510">
    <molecule id="Q96FC7-3"/>
</dbReference>
<dbReference type="Antibodypedia" id="45121">
    <property type="antibodies" value="42 antibodies from 16 providers"/>
</dbReference>
<dbReference type="DNASU" id="84457"/>
<dbReference type="Ensembl" id="ENST00000373878.3">
    <molecule id="Q96FC7-2"/>
    <property type="protein sequence ID" value="ENSP00000362985.3"/>
    <property type="gene ID" value="ENSG00000165443.12"/>
</dbReference>
<dbReference type="Ensembl" id="ENST00000373880.9">
    <molecule id="Q96FC7-1"/>
    <property type="protein sequence ID" value="ENSP00000362987.4"/>
    <property type="gene ID" value="ENSG00000165443.12"/>
</dbReference>
<dbReference type="Ensembl" id="ENST00000486074.2">
    <molecule id="Q96FC7-3"/>
    <property type="protein sequence ID" value="ENSP00000423634.1"/>
    <property type="gene ID" value="ENSG00000165443.12"/>
</dbReference>
<dbReference type="GeneID" id="84457"/>
<dbReference type="KEGG" id="hsa:84457"/>
<dbReference type="MANE-Select" id="ENST00000373880.9">
    <property type="protein sequence ID" value="ENSP00000362987.4"/>
    <property type="RefSeq nucleotide sequence ID" value="NM_032439.4"/>
    <property type="RefSeq protein sequence ID" value="NP_115815.2"/>
</dbReference>
<dbReference type="UCSC" id="uc001jkk.5">
    <molecule id="Q96FC7-1"/>
    <property type="organism name" value="human"/>
</dbReference>
<dbReference type="AGR" id="HGNC:29378"/>
<dbReference type="CTD" id="84457"/>
<dbReference type="DisGeNET" id="84457"/>
<dbReference type="GeneCards" id="PHYHIPL"/>
<dbReference type="HGNC" id="HGNC:29378">
    <property type="gene designation" value="PHYHIPL"/>
</dbReference>
<dbReference type="HPA" id="ENSG00000165443">
    <property type="expression patterns" value="Tissue enhanced (adrenal gland, brain, retina)"/>
</dbReference>
<dbReference type="neXtProt" id="NX_Q96FC7"/>
<dbReference type="OpenTargets" id="ENSG00000165443"/>
<dbReference type="PharmGKB" id="PA134906827"/>
<dbReference type="VEuPathDB" id="HostDB:ENSG00000165443"/>
<dbReference type="eggNOG" id="ENOG502QQIT">
    <property type="taxonomic scope" value="Eukaryota"/>
</dbReference>
<dbReference type="GeneTree" id="ENSGT00390000014563"/>
<dbReference type="HOGENOM" id="CLU_216044_0_0_1"/>
<dbReference type="InParanoid" id="Q96FC7"/>
<dbReference type="OMA" id="QLMSMST"/>
<dbReference type="OrthoDB" id="6101761at2759"/>
<dbReference type="PAN-GO" id="Q96FC7">
    <property type="GO annotations" value="1 GO annotation based on evolutionary models"/>
</dbReference>
<dbReference type="PhylomeDB" id="Q96FC7"/>
<dbReference type="TreeFam" id="TF314485"/>
<dbReference type="PathwayCommons" id="Q96FC7"/>
<dbReference type="SignaLink" id="Q96FC7"/>
<dbReference type="SIGNOR" id="Q96FC7"/>
<dbReference type="BioGRID-ORCS" id="84457">
    <property type="hits" value="8 hits in 1147 CRISPR screens"/>
</dbReference>
<dbReference type="ChiTaRS" id="PHYHIPL">
    <property type="organism name" value="human"/>
</dbReference>
<dbReference type="GeneWiki" id="PHYHIPL"/>
<dbReference type="GenomeRNAi" id="84457"/>
<dbReference type="Pharos" id="Q96FC7">
    <property type="development level" value="Tdark"/>
</dbReference>
<dbReference type="PRO" id="PR:Q96FC7"/>
<dbReference type="Proteomes" id="UP000005640">
    <property type="component" value="Chromosome 10"/>
</dbReference>
<dbReference type="RNAct" id="Q96FC7">
    <property type="molecule type" value="protein"/>
</dbReference>
<dbReference type="Bgee" id="ENSG00000165443">
    <property type="expression patterns" value="Expressed in prefrontal cortex and 144 other cell types or tissues"/>
</dbReference>
<dbReference type="GO" id="GO:0005737">
    <property type="term" value="C:cytoplasm"/>
    <property type="evidence" value="ECO:0000314"/>
    <property type="project" value="LIFEdb"/>
</dbReference>
<dbReference type="CDD" id="cd00063">
    <property type="entry name" value="FN3"/>
    <property type="match status" value="1"/>
</dbReference>
<dbReference type="FunFam" id="2.60.40.10:FF:000277">
    <property type="entry name" value="Phytanoyl-CoA hydroxylase-interacting protein-like protein"/>
    <property type="match status" value="1"/>
</dbReference>
<dbReference type="Gene3D" id="2.60.40.10">
    <property type="entry name" value="Immunoglobulins"/>
    <property type="match status" value="1"/>
</dbReference>
<dbReference type="InterPro" id="IPR003961">
    <property type="entry name" value="FN3_dom"/>
</dbReference>
<dbReference type="InterPro" id="IPR036116">
    <property type="entry name" value="FN3_sf"/>
</dbReference>
<dbReference type="InterPro" id="IPR013783">
    <property type="entry name" value="Ig-like_fold"/>
</dbReference>
<dbReference type="InterPro" id="IPR042868">
    <property type="entry name" value="PHYHIP/PHYHIPL"/>
</dbReference>
<dbReference type="InterPro" id="IPR045545">
    <property type="entry name" value="PHYIP/PHIPL_C"/>
</dbReference>
<dbReference type="PANTHER" id="PTHR15698:SF8">
    <property type="entry name" value="PHYTANOYL-COA HYDROXYLASE-INTERACTING PROTEIN-LIKE"/>
    <property type="match status" value="1"/>
</dbReference>
<dbReference type="PANTHER" id="PTHR15698">
    <property type="entry name" value="PROTEIN CBG15099"/>
    <property type="match status" value="1"/>
</dbReference>
<dbReference type="Pfam" id="PF00041">
    <property type="entry name" value="fn3"/>
    <property type="match status" value="1"/>
</dbReference>
<dbReference type="Pfam" id="PF19281">
    <property type="entry name" value="PHYHIP_C"/>
    <property type="match status" value="1"/>
</dbReference>
<dbReference type="SUPFAM" id="SSF49265">
    <property type="entry name" value="Fibronectin type III"/>
    <property type="match status" value="1"/>
</dbReference>
<dbReference type="PROSITE" id="PS50853">
    <property type="entry name" value="FN3"/>
    <property type="match status" value="1"/>
</dbReference>
<gene>
    <name type="primary">PHYHIPL</name>
    <name type="synonym">KIAA1796</name>
    <name type="ORF">UNQ6309/PRO20934</name>
</gene>
<reference key="1">
    <citation type="journal article" date="2001" name="Genome Res.">
        <title>Towards a catalog of human genes and proteins: sequencing and analysis of 500 novel complete protein coding human cDNAs.</title>
        <authorList>
            <person name="Wiemann S."/>
            <person name="Weil B."/>
            <person name="Wellenreuther R."/>
            <person name="Gassenhuber J."/>
            <person name="Glassl S."/>
            <person name="Ansorge W."/>
            <person name="Boecher M."/>
            <person name="Bloecker H."/>
            <person name="Bauersachs S."/>
            <person name="Blum H."/>
            <person name="Lauber J."/>
            <person name="Duesterhoeft A."/>
            <person name="Beyer A."/>
            <person name="Koehrer K."/>
            <person name="Strack N."/>
            <person name="Mewes H.-W."/>
            <person name="Ottenwaelder B."/>
            <person name="Obermaier B."/>
            <person name="Tampe J."/>
            <person name="Heubner D."/>
            <person name="Wambutt R."/>
            <person name="Korn B."/>
            <person name="Klein M."/>
            <person name="Poustka A."/>
        </authorList>
    </citation>
    <scope>NUCLEOTIDE SEQUENCE [LARGE SCALE MRNA] (ISOFORM 2)</scope>
    <scope>VARIANT LEU-342</scope>
    <source>
        <tissue>Amygdala</tissue>
    </source>
</reference>
<reference key="2">
    <citation type="journal article" date="2004" name="Nat. Genet.">
        <title>Complete sequencing and characterization of 21,243 full-length human cDNAs.</title>
        <authorList>
            <person name="Ota T."/>
            <person name="Suzuki Y."/>
            <person name="Nishikawa T."/>
            <person name="Otsuki T."/>
            <person name="Sugiyama T."/>
            <person name="Irie R."/>
            <person name="Wakamatsu A."/>
            <person name="Hayashi K."/>
            <person name="Sato H."/>
            <person name="Nagai K."/>
            <person name="Kimura K."/>
            <person name="Makita H."/>
            <person name="Sekine M."/>
            <person name="Obayashi M."/>
            <person name="Nishi T."/>
            <person name="Shibahara T."/>
            <person name="Tanaka T."/>
            <person name="Ishii S."/>
            <person name="Yamamoto J."/>
            <person name="Saito K."/>
            <person name="Kawai Y."/>
            <person name="Isono Y."/>
            <person name="Nakamura Y."/>
            <person name="Nagahari K."/>
            <person name="Murakami K."/>
            <person name="Yasuda T."/>
            <person name="Iwayanagi T."/>
            <person name="Wagatsuma M."/>
            <person name="Shiratori A."/>
            <person name="Sudo H."/>
            <person name="Hosoiri T."/>
            <person name="Kaku Y."/>
            <person name="Kodaira H."/>
            <person name="Kondo H."/>
            <person name="Sugawara M."/>
            <person name="Takahashi M."/>
            <person name="Kanda K."/>
            <person name="Yokoi T."/>
            <person name="Furuya T."/>
            <person name="Kikkawa E."/>
            <person name="Omura Y."/>
            <person name="Abe K."/>
            <person name="Kamihara K."/>
            <person name="Katsuta N."/>
            <person name="Sato K."/>
            <person name="Tanikawa M."/>
            <person name="Yamazaki M."/>
            <person name="Ninomiya K."/>
            <person name="Ishibashi T."/>
            <person name="Yamashita H."/>
            <person name="Murakawa K."/>
            <person name="Fujimori K."/>
            <person name="Tanai H."/>
            <person name="Kimata M."/>
            <person name="Watanabe M."/>
            <person name="Hiraoka S."/>
            <person name="Chiba Y."/>
            <person name="Ishida S."/>
            <person name="Ono Y."/>
            <person name="Takiguchi S."/>
            <person name="Watanabe S."/>
            <person name="Yosida M."/>
            <person name="Hotuta T."/>
            <person name="Kusano J."/>
            <person name="Kanehori K."/>
            <person name="Takahashi-Fujii A."/>
            <person name="Hara H."/>
            <person name="Tanase T.-O."/>
            <person name="Nomura Y."/>
            <person name="Togiya S."/>
            <person name="Komai F."/>
            <person name="Hara R."/>
            <person name="Takeuchi K."/>
            <person name="Arita M."/>
            <person name="Imose N."/>
            <person name="Musashino K."/>
            <person name="Yuuki H."/>
            <person name="Oshima A."/>
            <person name="Sasaki N."/>
            <person name="Aotsuka S."/>
            <person name="Yoshikawa Y."/>
            <person name="Matsunawa H."/>
            <person name="Ichihara T."/>
            <person name="Shiohata N."/>
            <person name="Sano S."/>
            <person name="Moriya S."/>
            <person name="Momiyama H."/>
            <person name="Satoh N."/>
            <person name="Takami S."/>
            <person name="Terashima Y."/>
            <person name="Suzuki O."/>
            <person name="Nakagawa S."/>
            <person name="Senoh A."/>
            <person name="Mizoguchi H."/>
            <person name="Goto Y."/>
            <person name="Shimizu F."/>
            <person name="Wakebe H."/>
            <person name="Hishigaki H."/>
            <person name="Watanabe T."/>
            <person name="Sugiyama A."/>
            <person name="Takemoto M."/>
            <person name="Kawakami B."/>
            <person name="Yamazaki M."/>
            <person name="Watanabe K."/>
            <person name="Kumagai A."/>
            <person name="Itakura S."/>
            <person name="Fukuzumi Y."/>
            <person name="Fujimori Y."/>
            <person name="Komiyama M."/>
            <person name="Tashiro H."/>
            <person name="Tanigami A."/>
            <person name="Fujiwara T."/>
            <person name="Ono T."/>
            <person name="Yamada K."/>
            <person name="Fujii Y."/>
            <person name="Ozaki K."/>
            <person name="Hirao M."/>
            <person name="Ohmori Y."/>
            <person name="Kawabata A."/>
            <person name="Hikiji T."/>
            <person name="Kobatake N."/>
            <person name="Inagaki H."/>
            <person name="Ikema Y."/>
            <person name="Okamoto S."/>
            <person name="Okitani R."/>
            <person name="Kawakami T."/>
            <person name="Noguchi S."/>
            <person name="Itoh T."/>
            <person name="Shigeta K."/>
            <person name="Senba T."/>
            <person name="Matsumura K."/>
            <person name="Nakajima Y."/>
            <person name="Mizuno T."/>
            <person name="Morinaga M."/>
            <person name="Sasaki M."/>
            <person name="Togashi T."/>
            <person name="Oyama M."/>
            <person name="Hata H."/>
            <person name="Watanabe M."/>
            <person name="Komatsu T."/>
            <person name="Mizushima-Sugano J."/>
            <person name="Satoh T."/>
            <person name="Shirai Y."/>
            <person name="Takahashi Y."/>
            <person name="Nakagawa K."/>
            <person name="Okumura K."/>
            <person name="Nagase T."/>
            <person name="Nomura N."/>
            <person name="Kikuchi H."/>
            <person name="Masuho Y."/>
            <person name="Yamashita R."/>
            <person name="Nakai K."/>
            <person name="Yada T."/>
            <person name="Nakamura Y."/>
            <person name="Ohara O."/>
            <person name="Isogai T."/>
            <person name="Sugano S."/>
        </authorList>
    </citation>
    <scope>NUCLEOTIDE SEQUENCE [LARGE SCALE MRNA] (ISOFORM 1)</scope>
    <scope>VARIANT LEU-342</scope>
    <source>
        <tissue>Cerebellum</tissue>
    </source>
</reference>
<reference key="3">
    <citation type="journal article" date="2007" name="BMC Genomics">
        <title>The full-ORF clone resource of the German cDNA consortium.</title>
        <authorList>
            <person name="Bechtel S."/>
            <person name="Rosenfelder H."/>
            <person name="Duda A."/>
            <person name="Schmidt C.P."/>
            <person name="Ernst U."/>
            <person name="Wellenreuther R."/>
            <person name="Mehrle A."/>
            <person name="Schuster C."/>
            <person name="Bahr A."/>
            <person name="Bloecker H."/>
            <person name="Heubner D."/>
            <person name="Hoerlein A."/>
            <person name="Michel G."/>
            <person name="Wedler H."/>
            <person name="Koehrer K."/>
            <person name="Ottenwaelder B."/>
            <person name="Poustka A."/>
            <person name="Wiemann S."/>
            <person name="Schupp I."/>
        </authorList>
    </citation>
    <scope>NUCLEOTIDE SEQUENCE [LARGE SCALE MRNA] (ISOFORMS 1 AND 3)</scope>
    <scope>VARIANT LEU-342</scope>
    <source>
        <tissue>Amygdala</tissue>
        <tissue>Retina</tissue>
    </source>
</reference>
<reference key="4">
    <citation type="journal article" date="2004" name="Nature">
        <title>The DNA sequence and comparative analysis of human chromosome 10.</title>
        <authorList>
            <person name="Deloukas P."/>
            <person name="Earthrowl M.E."/>
            <person name="Grafham D.V."/>
            <person name="Rubenfield M."/>
            <person name="French L."/>
            <person name="Steward C.A."/>
            <person name="Sims S.K."/>
            <person name="Jones M.C."/>
            <person name="Searle S."/>
            <person name="Scott C."/>
            <person name="Howe K."/>
            <person name="Hunt S.E."/>
            <person name="Andrews T.D."/>
            <person name="Gilbert J.G.R."/>
            <person name="Swarbreck D."/>
            <person name="Ashurst J.L."/>
            <person name="Taylor A."/>
            <person name="Battles J."/>
            <person name="Bird C.P."/>
            <person name="Ainscough R."/>
            <person name="Almeida J.P."/>
            <person name="Ashwell R.I.S."/>
            <person name="Ambrose K.D."/>
            <person name="Babbage A.K."/>
            <person name="Bagguley C.L."/>
            <person name="Bailey J."/>
            <person name="Banerjee R."/>
            <person name="Bates K."/>
            <person name="Beasley H."/>
            <person name="Bray-Allen S."/>
            <person name="Brown A.J."/>
            <person name="Brown J.Y."/>
            <person name="Burford D.C."/>
            <person name="Burrill W."/>
            <person name="Burton J."/>
            <person name="Cahill P."/>
            <person name="Camire D."/>
            <person name="Carter N.P."/>
            <person name="Chapman J.C."/>
            <person name="Clark S.Y."/>
            <person name="Clarke G."/>
            <person name="Clee C.M."/>
            <person name="Clegg S."/>
            <person name="Corby N."/>
            <person name="Coulson A."/>
            <person name="Dhami P."/>
            <person name="Dutta I."/>
            <person name="Dunn M."/>
            <person name="Faulkner L."/>
            <person name="Frankish A."/>
            <person name="Frankland J.A."/>
            <person name="Garner P."/>
            <person name="Garnett J."/>
            <person name="Gribble S."/>
            <person name="Griffiths C."/>
            <person name="Grocock R."/>
            <person name="Gustafson E."/>
            <person name="Hammond S."/>
            <person name="Harley J.L."/>
            <person name="Hart E."/>
            <person name="Heath P.D."/>
            <person name="Ho T.P."/>
            <person name="Hopkins B."/>
            <person name="Horne J."/>
            <person name="Howden P.J."/>
            <person name="Huckle E."/>
            <person name="Hynds C."/>
            <person name="Johnson C."/>
            <person name="Johnson D."/>
            <person name="Kana A."/>
            <person name="Kay M."/>
            <person name="Kimberley A.M."/>
            <person name="Kershaw J.K."/>
            <person name="Kokkinaki M."/>
            <person name="Laird G.K."/>
            <person name="Lawlor S."/>
            <person name="Lee H.M."/>
            <person name="Leongamornlert D.A."/>
            <person name="Laird G."/>
            <person name="Lloyd C."/>
            <person name="Lloyd D.M."/>
            <person name="Loveland J."/>
            <person name="Lovell J."/>
            <person name="McLaren S."/>
            <person name="McLay K.E."/>
            <person name="McMurray A."/>
            <person name="Mashreghi-Mohammadi M."/>
            <person name="Matthews L."/>
            <person name="Milne S."/>
            <person name="Nickerson T."/>
            <person name="Nguyen M."/>
            <person name="Overton-Larty E."/>
            <person name="Palmer S.A."/>
            <person name="Pearce A.V."/>
            <person name="Peck A.I."/>
            <person name="Pelan S."/>
            <person name="Phillimore B."/>
            <person name="Porter K."/>
            <person name="Rice C.M."/>
            <person name="Rogosin A."/>
            <person name="Ross M.T."/>
            <person name="Sarafidou T."/>
            <person name="Sehra H.K."/>
            <person name="Shownkeen R."/>
            <person name="Skuce C.D."/>
            <person name="Smith M."/>
            <person name="Standring L."/>
            <person name="Sycamore N."/>
            <person name="Tester J."/>
            <person name="Thorpe A."/>
            <person name="Torcasso W."/>
            <person name="Tracey A."/>
            <person name="Tromans A."/>
            <person name="Tsolas J."/>
            <person name="Wall M."/>
            <person name="Walsh J."/>
            <person name="Wang H."/>
            <person name="Weinstock K."/>
            <person name="West A.P."/>
            <person name="Willey D.L."/>
            <person name="Whitehead S.L."/>
            <person name="Wilming L."/>
            <person name="Wray P.W."/>
            <person name="Young L."/>
            <person name="Chen Y."/>
            <person name="Lovering R.C."/>
            <person name="Moschonas N.K."/>
            <person name="Siebert R."/>
            <person name="Fechtel K."/>
            <person name="Bentley D."/>
            <person name="Durbin R.M."/>
            <person name="Hubbard T."/>
            <person name="Doucette-Stamm L."/>
            <person name="Beck S."/>
            <person name="Smith D.R."/>
            <person name="Rogers J."/>
        </authorList>
    </citation>
    <scope>NUCLEOTIDE SEQUENCE [LARGE SCALE GENOMIC DNA]</scope>
</reference>
<reference key="5">
    <citation type="submission" date="2005-07" db="EMBL/GenBank/DDBJ databases">
        <authorList>
            <person name="Mural R.J."/>
            <person name="Istrail S."/>
            <person name="Sutton G.G."/>
            <person name="Florea L."/>
            <person name="Halpern A.L."/>
            <person name="Mobarry C.M."/>
            <person name="Lippert R."/>
            <person name="Walenz B."/>
            <person name="Shatkay H."/>
            <person name="Dew I."/>
            <person name="Miller J.R."/>
            <person name="Flanigan M.J."/>
            <person name="Edwards N.J."/>
            <person name="Bolanos R."/>
            <person name="Fasulo D."/>
            <person name="Halldorsson B.V."/>
            <person name="Hannenhalli S."/>
            <person name="Turner R."/>
            <person name="Yooseph S."/>
            <person name="Lu F."/>
            <person name="Nusskern D.R."/>
            <person name="Shue B.C."/>
            <person name="Zheng X.H."/>
            <person name="Zhong F."/>
            <person name="Delcher A.L."/>
            <person name="Huson D.H."/>
            <person name="Kravitz S.A."/>
            <person name="Mouchard L."/>
            <person name="Reinert K."/>
            <person name="Remington K.A."/>
            <person name="Clark A.G."/>
            <person name="Waterman M.S."/>
            <person name="Eichler E.E."/>
            <person name="Adams M.D."/>
            <person name="Hunkapiller M.W."/>
            <person name="Myers E.W."/>
            <person name="Venter J.C."/>
        </authorList>
    </citation>
    <scope>NUCLEOTIDE SEQUENCE [LARGE SCALE GENOMIC DNA]</scope>
    <scope>VARIANT LEU-342</scope>
</reference>
<reference key="6">
    <citation type="journal article" date="2004" name="Genome Res.">
        <title>The status, quality, and expansion of the NIH full-length cDNA project: the Mammalian Gene Collection (MGC).</title>
        <authorList>
            <consortium name="The MGC Project Team"/>
        </authorList>
    </citation>
    <scope>NUCLEOTIDE SEQUENCE [LARGE SCALE MRNA] (ISOFORM 1)</scope>
    <scope>VARIANT LEU-342</scope>
    <source>
        <tissue>Brain</tissue>
    </source>
</reference>
<reference key="7">
    <citation type="journal article" date="2003" name="Genome Res.">
        <title>The secreted protein discovery initiative (SPDI), a large-scale effort to identify novel human secreted and transmembrane proteins: a bioinformatics assessment.</title>
        <authorList>
            <person name="Clark H.F."/>
            <person name="Gurney A.L."/>
            <person name="Abaya E."/>
            <person name="Baker K."/>
            <person name="Baldwin D.T."/>
            <person name="Brush J."/>
            <person name="Chen J."/>
            <person name="Chow B."/>
            <person name="Chui C."/>
            <person name="Crowley C."/>
            <person name="Currell B."/>
            <person name="Deuel B."/>
            <person name="Dowd P."/>
            <person name="Eaton D."/>
            <person name="Foster J.S."/>
            <person name="Grimaldi C."/>
            <person name="Gu Q."/>
            <person name="Hass P.E."/>
            <person name="Heldens S."/>
            <person name="Huang A."/>
            <person name="Kim H.S."/>
            <person name="Klimowski L."/>
            <person name="Jin Y."/>
            <person name="Johnson S."/>
            <person name="Lee J."/>
            <person name="Lewis L."/>
            <person name="Liao D."/>
            <person name="Mark M.R."/>
            <person name="Robbie E."/>
            <person name="Sanchez C."/>
            <person name="Schoenfeld J."/>
            <person name="Seshagiri S."/>
            <person name="Simmons L."/>
            <person name="Singh J."/>
            <person name="Smith V."/>
            <person name="Stinson J."/>
            <person name="Vagts A."/>
            <person name="Vandlen R.L."/>
            <person name="Watanabe C."/>
            <person name="Wieand D."/>
            <person name="Woods K."/>
            <person name="Xie M.-H."/>
            <person name="Yansura D.G."/>
            <person name="Yi S."/>
            <person name="Yu G."/>
            <person name="Yuan J."/>
            <person name="Zhang M."/>
            <person name="Zhang Z."/>
            <person name="Goddard A.D."/>
            <person name="Wood W.I."/>
            <person name="Godowski P.J."/>
            <person name="Gray A.M."/>
        </authorList>
    </citation>
    <scope>NUCLEOTIDE SEQUENCE [LARGE SCALE MRNA] OF 36-376 (ISOFORM 1)</scope>
    <scope>VARIANT LEU-342</scope>
</reference>
<reference key="8">
    <citation type="journal article" date="2001" name="DNA Res.">
        <title>Prediction of the coding sequences of unidentified human genes. XX. The complete sequences of 100 new cDNA clones from brain which code for large proteins in vitro.</title>
        <authorList>
            <person name="Nagase T."/>
            <person name="Nakayama M."/>
            <person name="Nakajima D."/>
            <person name="Kikuno R."/>
            <person name="Ohara O."/>
        </authorList>
    </citation>
    <scope>NUCLEOTIDE SEQUENCE [LARGE SCALE MRNA] OF 132-376 (ISOFORM 1)</scope>
    <scope>VARIANT LEU-342</scope>
    <source>
        <tissue>Brain</tissue>
    </source>
</reference>
<reference key="9">
    <citation type="journal article" date="2011" name="BMC Syst. Biol.">
        <title>Initial characterization of the human central proteome.</title>
        <authorList>
            <person name="Burkard T.R."/>
            <person name="Planyavsky M."/>
            <person name="Kaupe I."/>
            <person name="Breitwieser F.P."/>
            <person name="Buerckstuemmer T."/>
            <person name="Bennett K.L."/>
            <person name="Superti-Furga G."/>
            <person name="Colinge J."/>
        </authorList>
    </citation>
    <scope>IDENTIFICATION BY MASS SPECTROMETRY [LARGE SCALE ANALYSIS]</scope>
</reference>
<reference key="10">
    <citation type="journal article" date="2014" name="J. Proteomics">
        <title>An enzyme assisted RP-RPLC approach for in-depth analysis of human liver phosphoproteome.</title>
        <authorList>
            <person name="Bian Y."/>
            <person name="Song C."/>
            <person name="Cheng K."/>
            <person name="Dong M."/>
            <person name="Wang F."/>
            <person name="Huang J."/>
            <person name="Sun D."/>
            <person name="Wang L."/>
            <person name="Ye M."/>
            <person name="Zou H."/>
        </authorList>
    </citation>
    <scope>IDENTIFICATION BY MASS SPECTROMETRY [LARGE SCALE ANALYSIS]</scope>
    <source>
        <tissue>Liver</tissue>
    </source>
</reference>
<accession>Q96FC7</accession>
<accession>B7WP61</accession>
<accession>Q68DF3</accession>
<accession>Q6UXY3</accession>
<accession>Q8N3W3</accession>
<accession>Q96JM9</accession>
<accession>Q96NP7</accession>
<feature type="chain" id="PRO_0000338641" description="Phytanoyl-CoA hydroxylase-interacting protein-like">
    <location>
        <begin position="1"/>
        <end position="376"/>
    </location>
</feature>
<feature type="domain" description="Fibronectin type-III" evidence="4">
    <location>
        <begin position="52"/>
        <end position="161"/>
    </location>
</feature>
<feature type="modified residue" description="Phosphoserine" evidence="2">
    <location>
        <position position="12"/>
    </location>
</feature>
<feature type="modified residue" description="Phosphoserine" evidence="2">
    <location>
        <position position="15"/>
    </location>
</feature>
<feature type="modified residue" description="Phosphoserine" evidence="2">
    <location>
        <position position="25"/>
    </location>
</feature>
<feature type="glycosylation site" description="N-linked (GlcNAc...) asparagine" evidence="3">
    <location>
        <position position="23"/>
    </location>
</feature>
<feature type="glycosylation site" description="N-linked (GlcNAc...) asparagine" evidence="3">
    <location>
        <position position="37"/>
    </location>
</feature>
<feature type="splice variant" id="VSP_034067" description="In isoform 2." evidence="12">
    <original>MEVPRLDHALNSPTSPCEEVIKNLSLEAIQLCDRDG</original>
    <variation>MCCDSDFVAR</variation>
    <location>
        <begin position="1"/>
        <end position="36"/>
    </location>
</feature>
<feature type="splice variant" id="VSP_034068" description="In isoform 3." evidence="13">
    <original>GNKSQDSGIAEMEE</original>
    <variation>VVFEELTSKQTRKG</variation>
    <location>
        <begin position="36"/>
        <end position="49"/>
    </location>
</feature>
<feature type="splice variant" id="VSP_034069" description="In isoform 3." evidence="13">
    <location>
        <begin position="50"/>
        <end position="376"/>
    </location>
</feature>
<feature type="sequence variant" id="VAR_043817" description="In dbSNP:rs2452505." evidence="5 6 7 8 9 10 11">
    <original>V</original>
    <variation>L</variation>
    <location>
        <position position="342"/>
    </location>
</feature>